<dbReference type="EC" id="1.2.1.38" evidence="1"/>
<dbReference type="EMBL" id="AE014299">
    <property type="protein sequence ID" value="AAN53360.1"/>
    <property type="molecule type" value="Genomic_DNA"/>
</dbReference>
<dbReference type="RefSeq" id="NP_715915.1">
    <property type="nucleotide sequence ID" value="NC_004347.2"/>
</dbReference>
<dbReference type="RefSeq" id="WP_011070647.1">
    <property type="nucleotide sequence ID" value="NC_004347.2"/>
</dbReference>
<dbReference type="SMR" id="P59309"/>
<dbReference type="STRING" id="211586.SO_0275"/>
<dbReference type="PaxDb" id="211586-SO_0275"/>
<dbReference type="KEGG" id="son:SO_0275"/>
<dbReference type="PATRIC" id="fig|211586.12.peg.266"/>
<dbReference type="eggNOG" id="COG0002">
    <property type="taxonomic scope" value="Bacteria"/>
</dbReference>
<dbReference type="HOGENOM" id="CLU_006384_0_1_6"/>
<dbReference type="OrthoDB" id="9801289at2"/>
<dbReference type="PhylomeDB" id="P59309"/>
<dbReference type="BioCyc" id="SONE211586:G1GMP-265-MONOMER"/>
<dbReference type="UniPathway" id="UPA00068">
    <property type="reaction ID" value="UER00108"/>
</dbReference>
<dbReference type="Proteomes" id="UP000008186">
    <property type="component" value="Chromosome"/>
</dbReference>
<dbReference type="GO" id="GO:0005737">
    <property type="term" value="C:cytoplasm"/>
    <property type="evidence" value="ECO:0007669"/>
    <property type="project" value="UniProtKB-SubCell"/>
</dbReference>
<dbReference type="GO" id="GO:0003942">
    <property type="term" value="F:N-acetyl-gamma-glutamyl-phosphate reductase activity"/>
    <property type="evidence" value="ECO:0007669"/>
    <property type="project" value="UniProtKB-UniRule"/>
</dbReference>
<dbReference type="GO" id="GO:0051287">
    <property type="term" value="F:NAD binding"/>
    <property type="evidence" value="ECO:0007669"/>
    <property type="project" value="InterPro"/>
</dbReference>
<dbReference type="GO" id="GO:0070401">
    <property type="term" value="F:NADP+ binding"/>
    <property type="evidence" value="ECO:0007669"/>
    <property type="project" value="InterPro"/>
</dbReference>
<dbReference type="GO" id="GO:0006526">
    <property type="term" value="P:L-arginine biosynthetic process"/>
    <property type="evidence" value="ECO:0007669"/>
    <property type="project" value="UniProtKB-UniRule"/>
</dbReference>
<dbReference type="CDD" id="cd23934">
    <property type="entry name" value="AGPR_1_C"/>
    <property type="match status" value="1"/>
</dbReference>
<dbReference type="CDD" id="cd17895">
    <property type="entry name" value="AGPR_1_N"/>
    <property type="match status" value="1"/>
</dbReference>
<dbReference type="FunFam" id="3.30.360.10:FF:000014">
    <property type="entry name" value="N-acetyl-gamma-glutamyl-phosphate reductase"/>
    <property type="match status" value="1"/>
</dbReference>
<dbReference type="Gene3D" id="3.30.360.10">
    <property type="entry name" value="Dihydrodipicolinate Reductase, domain 2"/>
    <property type="match status" value="1"/>
</dbReference>
<dbReference type="Gene3D" id="3.40.50.720">
    <property type="entry name" value="NAD(P)-binding Rossmann-like Domain"/>
    <property type="match status" value="1"/>
</dbReference>
<dbReference type="HAMAP" id="MF_00150">
    <property type="entry name" value="ArgC_type1"/>
    <property type="match status" value="1"/>
</dbReference>
<dbReference type="InterPro" id="IPR023013">
    <property type="entry name" value="AGPR_AS"/>
</dbReference>
<dbReference type="InterPro" id="IPR000706">
    <property type="entry name" value="AGPR_type-1"/>
</dbReference>
<dbReference type="InterPro" id="IPR036291">
    <property type="entry name" value="NAD(P)-bd_dom_sf"/>
</dbReference>
<dbReference type="InterPro" id="IPR050085">
    <property type="entry name" value="NAGSA_dehydrogenase"/>
</dbReference>
<dbReference type="InterPro" id="IPR000534">
    <property type="entry name" value="Semialdehyde_DH_NAD-bd"/>
</dbReference>
<dbReference type="NCBIfam" id="TIGR01850">
    <property type="entry name" value="argC"/>
    <property type="match status" value="1"/>
</dbReference>
<dbReference type="PANTHER" id="PTHR32338:SF10">
    <property type="entry name" value="N-ACETYL-GAMMA-GLUTAMYL-PHOSPHATE REDUCTASE, CHLOROPLASTIC-RELATED"/>
    <property type="match status" value="1"/>
</dbReference>
<dbReference type="PANTHER" id="PTHR32338">
    <property type="entry name" value="N-ACETYL-GAMMA-GLUTAMYL-PHOSPHATE REDUCTASE, CHLOROPLASTIC-RELATED-RELATED"/>
    <property type="match status" value="1"/>
</dbReference>
<dbReference type="Pfam" id="PF01118">
    <property type="entry name" value="Semialdhyde_dh"/>
    <property type="match status" value="1"/>
</dbReference>
<dbReference type="Pfam" id="PF22698">
    <property type="entry name" value="Semialdhyde_dhC_1"/>
    <property type="match status" value="1"/>
</dbReference>
<dbReference type="SMART" id="SM00859">
    <property type="entry name" value="Semialdhyde_dh"/>
    <property type="match status" value="1"/>
</dbReference>
<dbReference type="SUPFAM" id="SSF55347">
    <property type="entry name" value="Glyceraldehyde-3-phosphate dehydrogenase-like, C-terminal domain"/>
    <property type="match status" value="1"/>
</dbReference>
<dbReference type="SUPFAM" id="SSF51735">
    <property type="entry name" value="NAD(P)-binding Rossmann-fold domains"/>
    <property type="match status" value="1"/>
</dbReference>
<dbReference type="PROSITE" id="PS01224">
    <property type="entry name" value="ARGC"/>
    <property type="match status" value="1"/>
</dbReference>
<organism>
    <name type="scientific">Shewanella oneidensis (strain ATCC 700550 / JCM 31522 / CIP 106686 / LMG 19005 / NCIMB 14063 / MR-1)</name>
    <dbReference type="NCBI Taxonomy" id="211586"/>
    <lineage>
        <taxon>Bacteria</taxon>
        <taxon>Pseudomonadati</taxon>
        <taxon>Pseudomonadota</taxon>
        <taxon>Gammaproteobacteria</taxon>
        <taxon>Alteromonadales</taxon>
        <taxon>Shewanellaceae</taxon>
        <taxon>Shewanella</taxon>
    </lineage>
</organism>
<accession>P59309</accession>
<sequence length="326" mass="35069">MKNIAIIGASGYTGAQLTALVHAESELSIQGLYVSENSLDKGRALADLYPVYSHIELTLSPLTEEAKANIVAEADAVVLATEHSVSLHLAAWFYSQGLAVFDLSGAYRFSDVAQYPKWYGFEHEYPEVLAKAVYGLAEWNAKDVAATKMIAVPGCYPTASLTALKPLKNLLTSAYPVINAVSGVTGAGRKAQLHTSFCEVSLTPYGVLGHRHQPEIATQLGQEVIFTPHLGNFKRGILATITVQLKPGTTTADVAAAYSVYDQAPLVTVKQNQFPKVDDVVLTPNCHLGWKFDESSGYLVVASAIDNLMKGAASQALQCIKIHFNL</sequence>
<comment type="function">
    <text evidence="1">Catalyzes the NADPH-dependent reduction of N-acetyl-5-glutamyl phosphate to yield N-acetyl-L-glutamate 5-semialdehyde.</text>
</comment>
<comment type="catalytic activity">
    <reaction evidence="1">
        <text>N-acetyl-L-glutamate 5-semialdehyde + phosphate + NADP(+) = N-acetyl-L-glutamyl 5-phosphate + NADPH + H(+)</text>
        <dbReference type="Rhea" id="RHEA:21588"/>
        <dbReference type="ChEBI" id="CHEBI:15378"/>
        <dbReference type="ChEBI" id="CHEBI:29123"/>
        <dbReference type="ChEBI" id="CHEBI:43474"/>
        <dbReference type="ChEBI" id="CHEBI:57783"/>
        <dbReference type="ChEBI" id="CHEBI:57936"/>
        <dbReference type="ChEBI" id="CHEBI:58349"/>
        <dbReference type="EC" id="1.2.1.38"/>
    </reaction>
</comment>
<comment type="pathway">
    <text evidence="1">Amino-acid biosynthesis; L-arginine biosynthesis; N(2)-acetyl-L-ornithine from L-glutamate: step 3/4.</text>
</comment>
<comment type="subcellular location">
    <subcellularLocation>
        <location evidence="1">Cytoplasm</location>
    </subcellularLocation>
</comment>
<comment type="similarity">
    <text evidence="1">Belongs to the NAGSA dehydrogenase family. Type 1 subfamily.</text>
</comment>
<keyword id="KW-0028">Amino-acid biosynthesis</keyword>
<keyword id="KW-0055">Arginine biosynthesis</keyword>
<keyword id="KW-0963">Cytoplasm</keyword>
<keyword id="KW-0521">NADP</keyword>
<keyword id="KW-0560">Oxidoreductase</keyword>
<keyword id="KW-1185">Reference proteome</keyword>
<proteinExistence type="inferred from homology"/>
<gene>
    <name evidence="1" type="primary">argC</name>
    <name type="ordered locus">SO_0275</name>
</gene>
<reference key="1">
    <citation type="journal article" date="2002" name="Nat. Biotechnol.">
        <title>Genome sequence of the dissimilatory metal ion-reducing bacterium Shewanella oneidensis.</title>
        <authorList>
            <person name="Heidelberg J.F."/>
            <person name="Paulsen I.T."/>
            <person name="Nelson K.E."/>
            <person name="Gaidos E.J."/>
            <person name="Nelson W.C."/>
            <person name="Read T.D."/>
            <person name="Eisen J.A."/>
            <person name="Seshadri R."/>
            <person name="Ward N.L."/>
            <person name="Methe B.A."/>
            <person name="Clayton R.A."/>
            <person name="Meyer T."/>
            <person name="Tsapin A."/>
            <person name="Scott J."/>
            <person name="Beanan M.J."/>
            <person name="Brinkac L.M."/>
            <person name="Daugherty S.C."/>
            <person name="DeBoy R.T."/>
            <person name="Dodson R.J."/>
            <person name="Durkin A.S."/>
            <person name="Haft D.H."/>
            <person name="Kolonay J.F."/>
            <person name="Madupu R."/>
            <person name="Peterson J.D."/>
            <person name="Umayam L.A."/>
            <person name="White O."/>
            <person name="Wolf A.M."/>
            <person name="Vamathevan J.J."/>
            <person name="Weidman J.F."/>
            <person name="Impraim M."/>
            <person name="Lee K."/>
            <person name="Berry K.J."/>
            <person name="Lee C."/>
            <person name="Mueller J."/>
            <person name="Khouri H.M."/>
            <person name="Gill J."/>
            <person name="Utterback T.R."/>
            <person name="McDonald L.A."/>
            <person name="Feldblyum T.V."/>
            <person name="Smith H.O."/>
            <person name="Venter J.C."/>
            <person name="Nealson K.H."/>
            <person name="Fraser C.M."/>
        </authorList>
    </citation>
    <scope>NUCLEOTIDE SEQUENCE [LARGE SCALE GENOMIC DNA]</scope>
    <source>
        <strain>ATCC 700550 / JCM 31522 / CIP 106686 / LMG 19005 / NCIMB 14063 / MR-1</strain>
    </source>
</reference>
<feature type="chain" id="PRO_0000112445" description="N-acetyl-gamma-glutamyl-phosphate reductase">
    <location>
        <begin position="1"/>
        <end position="326"/>
    </location>
</feature>
<feature type="active site" evidence="1">
    <location>
        <position position="155"/>
    </location>
</feature>
<protein>
    <recommendedName>
        <fullName evidence="1">N-acetyl-gamma-glutamyl-phosphate reductase</fullName>
        <shortName evidence="1">AGPR</shortName>
        <ecNumber evidence="1">1.2.1.38</ecNumber>
    </recommendedName>
    <alternativeName>
        <fullName evidence="1">N-acetyl-glutamate semialdehyde dehydrogenase</fullName>
        <shortName evidence="1">NAGSA dehydrogenase</shortName>
    </alternativeName>
</protein>
<name>ARGC_SHEON</name>
<evidence type="ECO:0000255" key="1">
    <source>
        <dbReference type="HAMAP-Rule" id="MF_00150"/>
    </source>
</evidence>